<proteinExistence type="evidence at protein level"/>
<gene>
    <name evidence="17 19" type="primary">MSL2</name>
    <name evidence="15" type="synonym">KIAA1585</name>
    <name type="synonym">MSL2L1</name>
    <name type="synonym">RNF184</name>
</gene>
<name>MSL2_HUMAN</name>
<keyword id="KW-0002">3D-structure</keyword>
<keyword id="KW-0025">Alternative splicing</keyword>
<keyword id="KW-1268">Autism spectrum disorder</keyword>
<keyword id="KW-0156">Chromatin regulator</keyword>
<keyword id="KW-0158">Chromosome</keyword>
<keyword id="KW-0225">Disease variant</keyword>
<keyword id="KW-0227">DNA damage</keyword>
<keyword id="KW-0991">Intellectual disability</keyword>
<keyword id="KW-1017">Isopeptide bond</keyword>
<keyword id="KW-0479">Metal-binding</keyword>
<keyword id="KW-0539">Nucleus</keyword>
<keyword id="KW-0597">Phosphoprotein</keyword>
<keyword id="KW-1267">Proteomics identification</keyword>
<keyword id="KW-1185">Reference proteome</keyword>
<keyword id="KW-0808">Transferase</keyword>
<keyword id="KW-0832">Ubl conjugation</keyword>
<keyword id="KW-0833">Ubl conjugation pathway</keyword>
<keyword id="KW-0862">Zinc</keyword>
<keyword id="KW-0863">Zinc-finger</keyword>
<feature type="chain" id="PRO_0000299536" description="E3 ubiquitin-protein ligase MSL2">
    <location>
        <begin position="1"/>
        <end position="577"/>
    </location>
</feature>
<feature type="domain" description="CXC MSL2-type" evidence="4">
    <location>
        <begin position="457"/>
        <end position="508"/>
    </location>
</feature>
<feature type="zinc finger region" description="RING-type" evidence="3">
    <location>
        <begin position="44"/>
        <end position="85"/>
    </location>
</feature>
<feature type="region of interest" description="Sufficient for interaction with MSL1" evidence="10">
    <location>
        <begin position="1"/>
        <end position="116"/>
    </location>
</feature>
<feature type="region of interest" description="Disordered" evidence="5">
    <location>
        <begin position="405"/>
        <end position="427"/>
    </location>
</feature>
<feature type="compositionally biased region" description="Basic residues" evidence="5">
    <location>
        <begin position="407"/>
        <end position="423"/>
    </location>
</feature>
<feature type="binding site" evidence="10 20 21">
    <location>
        <position position="44"/>
    </location>
    <ligand>
        <name>Zn(2+)</name>
        <dbReference type="ChEBI" id="CHEBI:29105"/>
        <label>1</label>
    </ligand>
</feature>
<feature type="binding site" evidence="10 20 21">
    <location>
        <position position="47"/>
    </location>
    <ligand>
        <name>Zn(2+)</name>
        <dbReference type="ChEBI" id="CHEBI:29105"/>
        <label>1</label>
    </ligand>
</feature>
<feature type="binding site" evidence="10 20 21">
    <location>
        <position position="62"/>
    </location>
    <ligand>
        <name>Zn(2+)</name>
        <dbReference type="ChEBI" id="CHEBI:29105"/>
        <label>2</label>
    </ligand>
</feature>
<feature type="binding site" evidence="10 20 21">
    <location>
        <position position="64"/>
    </location>
    <ligand>
        <name>Zn(2+)</name>
        <dbReference type="ChEBI" id="CHEBI:29105"/>
        <label>2</label>
    </ligand>
</feature>
<feature type="binding site" evidence="10 20 21">
    <location>
        <position position="67"/>
    </location>
    <ligand>
        <name>Zn(2+)</name>
        <dbReference type="ChEBI" id="CHEBI:29105"/>
        <label>1</label>
    </ligand>
</feature>
<feature type="binding site" evidence="10 20 21">
    <location>
        <position position="70"/>
    </location>
    <ligand>
        <name>Zn(2+)</name>
        <dbReference type="ChEBI" id="CHEBI:29105"/>
        <label>1</label>
    </ligand>
</feature>
<feature type="binding site" evidence="10 20 21">
    <location>
        <position position="81"/>
    </location>
    <ligand>
        <name>Zn(2+)</name>
        <dbReference type="ChEBI" id="CHEBI:29105"/>
        <label>2</label>
    </ligand>
</feature>
<feature type="binding site" evidence="10 20 21">
    <location>
        <position position="84"/>
    </location>
    <ligand>
        <name>Zn(2+)</name>
        <dbReference type="ChEBI" id="CHEBI:29105"/>
        <label>2</label>
    </ligand>
</feature>
<feature type="binding site" evidence="4">
    <location>
        <position position="462"/>
    </location>
    <ligand>
        <name>Zn(2+)</name>
        <dbReference type="ChEBI" id="CHEBI:29105"/>
        <label>3</label>
    </ligand>
</feature>
<feature type="binding site" evidence="4">
    <location>
        <position position="462"/>
    </location>
    <ligand>
        <name>Zn(2+)</name>
        <dbReference type="ChEBI" id="CHEBI:29105"/>
        <label>4</label>
    </ligand>
</feature>
<feature type="binding site" evidence="4">
    <location>
        <position position="464"/>
    </location>
    <ligand>
        <name>Zn(2+)</name>
        <dbReference type="ChEBI" id="CHEBI:29105"/>
        <label>3</label>
    </ligand>
</feature>
<feature type="binding site" evidence="4">
    <location>
        <position position="476"/>
    </location>
    <ligand>
        <name>Zn(2+)</name>
        <dbReference type="ChEBI" id="CHEBI:29105"/>
        <label>3</label>
    </ligand>
</feature>
<feature type="binding site" evidence="4">
    <location>
        <position position="476"/>
    </location>
    <ligand>
        <name>Zn(2+)</name>
        <dbReference type="ChEBI" id="CHEBI:29105"/>
        <label>5</label>
    </ligand>
</feature>
<feature type="binding site" evidence="4">
    <location>
        <position position="481"/>
    </location>
    <ligand>
        <name>Zn(2+)</name>
        <dbReference type="ChEBI" id="CHEBI:29105"/>
        <label>3</label>
    </ligand>
</feature>
<feature type="binding site" evidence="4">
    <location>
        <position position="483"/>
    </location>
    <ligand>
        <name>Zn(2+)</name>
        <dbReference type="ChEBI" id="CHEBI:29105"/>
        <label>4</label>
    </ligand>
</feature>
<feature type="binding site" evidence="4">
    <location>
        <position position="490"/>
    </location>
    <ligand>
        <name>Zn(2+)</name>
        <dbReference type="ChEBI" id="CHEBI:29105"/>
        <label>4</label>
    </ligand>
</feature>
<feature type="binding site" evidence="4">
    <location>
        <position position="490"/>
    </location>
    <ligand>
        <name>Zn(2+)</name>
        <dbReference type="ChEBI" id="CHEBI:29105"/>
        <label>5</label>
    </ligand>
</feature>
<feature type="binding site" evidence="4">
    <location>
        <position position="493"/>
    </location>
    <ligand>
        <name>Zn(2+)</name>
        <dbReference type="ChEBI" id="CHEBI:29105"/>
        <label>4</label>
    </ligand>
</feature>
<feature type="binding site" evidence="4">
    <location>
        <position position="495"/>
    </location>
    <ligand>
        <name>Zn(2+)</name>
        <dbReference type="ChEBI" id="CHEBI:29105"/>
        <label>5</label>
    </ligand>
</feature>
<feature type="binding site" evidence="4">
    <location>
        <position position="498"/>
    </location>
    <ligand>
        <name>Zn(2+)</name>
        <dbReference type="ChEBI" id="CHEBI:29105"/>
        <label>5</label>
    </ligand>
</feature>
<feature type="modified residue" description="Phosphoserine" evidence="22">
    <location>
        <position position="447"/>
    </location>
</feature>
<feature type="cross-link" description="Glycyl lysine isopeptide (Lys-Gly) (interchain with G-Cter in SUMO2)" evidence="23 24">
    <location>
        <position position="375"/>
    </location>
</feature>
<feature type="splice variant" id="VSP_046200" description="In isoform 2." evidence="16">
    <location>
        <begin position="1"/>
        <end position="74"/>
    </location>
</feature>
<feature type="sequence variant" id="VAR_090088" description="In KBHS; uncertain significance." evidence="14">
    <original>R</original>
    <variation>L</variation>
    <location>
        <position position="15"/>
    </location>
</feature>
<feature type="sequence variant" id="VAR_090089" description="In KBHS; likely pathogenic." evidence="14">
    <location>
        <begin position="171"/>
        <end position="577"/>
    </location>
</feature>
<feature type="sequence variant" id="VAR_090090" description="In KBHS; uncertain significance; dbSNP:rs2108057618." evidence="14">
    <original>M</original>
    <variation>V</variation>
    <location>
        <position position="317"/>
    </location>
</feature>
<feature type="sequence variant" id="VAR_090091" description="In KBHS; likely pathogenic." evidence="14">
    <location>
        <begin position="353"/>
        <end position="577"/>
    </location>
</feature>
<feature type="mutagenesis site" description="Great reduction in H2B ubiquitination. No effect on MSL1-binding." evidence="9">
    <original>H</original>
    <variation>Y</variation>
    <location>
        <position position="64"/>
    </location>
</feature>
<feature type="sequence conflict" description="In Ref. 2; BAG63776." evidence="18" ref="2">
    <original>D</original>
    <variation>E</variation>
    <location>
        <position position="348"/>
    </location>
</feature>
<feature type="sequence conflict" description="In Ref. 2; BAA91673." evidence="18" ref="2">
    <original>S</original>
    <variation>G</variation>
    <location>
        <position position="411"/>
    </location>
</feature>
<feature type="helix" evidence="25">
    <location>
        <begin position="4"/>
        <end position="18"/>
    </location>
</feature>
<feature type="helix" evidence="25">
    <location>
        <begin position="25"/>
        <end position="40"/>
    </location>
</feature>
<feature type="turn" evidence="25">
    <location>
        <begin position="45"/>
        <end position="47"/>
    </location>
</feature>
<feature type="strand" evidence="25">
    <location>
        <begin position="48"/>
        <end position="50"/>
    </location>
</feature>
<feature type="helix" evidence="25">
    <location>
        <begin position="68"/>
        <end position="70"/>
    </location>
</feature>
<feature type="strand" evidence="25">
    <location>
        <begin position="77"/>
        <end position="79"/>
    </location>
</feature>
<feature type="turn" evidence="25">
    <location>
        <begin position="82"/>
        <end position="84"/>
    </location>
</feature>
<feature type="helix" evidence="25">
    <location>
        <begin position="94"/>
        <end position="114"/>
    </location>
</feature>
<reference key="1">
    <citation type="journal article" date="2000" name="DNA Res.">
        <title>Prediction of the coding sequences of unidentified human genes. XVIII. The complete sequences of 100 new cDNA clones from brain which code for large proteins in vitro.</title>
        <authorList>
            <person name="Nagase T."/>
            <person name="Kikuno R."/>
            <person name="Nakayama M."/>
            <person name="Hirosawa M."/>
            <person name="Ohara O."/>
        </authorList>
    </citation>
    <scope>NUCLEOTIDE SEQUENCE [LARGE SCALE MRNA] (ISOFORM 1)</scope>
    <source>
        <tissue>Brain</tissue>
    </source>
</reference>
<reference key="2">
    <citation type="journal article" date="2004" name="Nat. Genet.">
        <title>Complete sequencing and characterization of 21,243 full-length human cDNAs.</title>
        <authorList>
            <person name="Ota T."/>
            <person name="Suzuki Y."/>
            <person name="Nishikawa T."/>
            <person name="Otsuki T."/>
            <person name="Sugiyama T."/>
            <person name="Irie R."/>
            <person name="Wakamatsu A."/>
            <person name="Hayashi K."/>
            <person name="Sato H."/>
            <person name="Nagai K."/>
            <person name="Kimura K."/>
            <person name="Makita H."/>
            <person name="Sekine M."/>
            <person name="Obayashi M."/>
            <person name="Nishi T."/>
            <person name="Shibahara T."/>
            <person name="Tanaka T."/>
            <person name="Ishii S."/>
            <person name="Yamamoto J."/>
            <person name="Saito K."/>
            <person name="Kawai Y."/>
            <person name="Isono Y."/>
            <person name="Nakamura Y."/>
            <person name="Nagahari K."/>
            <person name="Murakami K."/>
            <person name="Yasuda T."/>
            <person name="Iwayanagi T."/>
            <person name="Wagatsuma M."/>
            <person name="Shiratori A."/>
            <person name="Sudo H."/>
            <person name="Hosoiri T."/>
            <person name="Kaku Y."/>
            <person name="Kodaira H."/>
            <person name="Kondo H."/>
            <person name="Sugawara M."/>
            <person name="Takahashi M."/>
            <person name="Kanda K."/>
            <person name="Yokoi T."/>
            <person name="Furuya T."/>
            <person name="Kikkawa E."/>
            <person name="Omura Y."/>
            <person name="Abe K."/>
            <person name="Kamihara K."/>
            <person name="Katsuta N."/>
            <person name="Sato K."/>
            <person name="Tanikawa M."/>
            <person name="Yamazaki M."/>
            <person name="Ninomiya K."/>
            <person name="Ishibashi T."/>
            <person name="Yamashita H."/>
            <person name="Murakawa K."/>
            <person name="Fujimori K."/>
            <person name="Tanai H."/>
            <person name="Kimata M."/>
            <person name="Watanabe M."/>
            <person name="Hiraoka S."/>
            <person name="Chiba Y."/>
            <person name="Ishida S."/>
            <person name="Ono Y."/>
            <person name="Takiguchi S."/>
            <person name="Watanabe S."/>
            <person name="Yosida M."/>
            <person name="Hotuta T."/>
            <person name="Kusano J."/>
            <person name="Kanehori K."/>
            <person name="Takahashi-Fujii A."/>
            <person name="Hara H."/>
            <person name="Tanase T.-O."/>
            <person name="Nomura Y."/>
            <person name="Togiya S."/>
            <person name="Komai F."/>
            <person name="Hara R."/>
            <person name="Takeuchi K."/>
            <person name="Arita M."/>
            <person name="Imose N."/>
            <person name="Musashino K."/>
            <person name="Yuuki H."/>
            <person name="Oshima A."/>
            <person name="Sasaki N."/>
            <person name="Aotsuka S."/>
            <person name="Yoshikawa Y."/>
            <person name="Matsunawa H."/>
            <person name="Ichihara T."/>
            <person name="Shiohata N."/>
            <person name="Sano S."/>
            <person name="Moriya S."/>
            <person name="Momiyama H."/>
            <person name="Satoh N."/>
            <person name="Takami S."/>
            <person name="Terashima Y."/>
            <person name="Suzuki O."/>
            <person name="Nakagawa S."/>
            <person name="Senoh A."/>
            <person name="Mizoguchi H."/>
            <person name="Goto Y."/>
            <person name="Shimizu F."/>
            <person name="Wakebe H."/>
            <person name="Hishigaki H."/>
            <person name="Watanabe T."/>
            <person name="Sugiyama A."/>
            <person name="Takemoto M."/>
            <person name="Kawakami B."/>
            <person name="Yamazaki M."/>
            <person name="Watanabe K."/>
            <person name="Kumagai A."/>
            <person name="Itakura S."/>
            <person name="Fukuzumi Y."/>
            <person name="Fujimori Y."/>
            <person name="Komiyama M."/>
            <person name="Tashiro H."/>
            <person name="Tanigami A."/>
            <person name="Fujiwara T."/>
            <person name="Ono T."/>
            <person name="Yamada K."/>
            <person name="Fujii Y."/>
            <person name="Ozaki K."/>
            <person name="Hirao M."/>
            <person name="Ohmori Y."/>
            <person name="Kawabata A."/>
            <person name="Hikiji T."/>
            <person name="Kobatake N."/>
            <person name="Inagaki H."/>
            <person name="Ikema Y."/>
            <person name="Okamoto S."/>
            <person name="Okitani R."/>
            <person name="Kawakami T."/>
            <person name="Noguchi S."/>
            <person name="Itoh T."/>
            <person name="Shigeta K."/>
            <person name="Senba T."/>
            <person name="Matsumura K."/>
            <person name="Nakajima Y."/>
            <person name="Mizuno T."/>
            <person name="Morinaga M."/>
            <person name="Sasaki M."/>
            <person name="Togashi T."/>
            <person name="Oyama M."/>
            <person name="Hata H."/>
            <person name="Watanabe M."/>
            <person name="Komatsu T."/>
            <person name="Mizushima-Sugano J."/>
            <person name="Satoh T."/>
            <person name="Shirai Y."/>
            <person name="Takahashi Y."/>
            <person name="Nakagawa K."/>
            <person name="Okumura K."/>
            <person name="Nagase T."/>
            <person name="Nomura N."/>
            <person name="Kikuchi H."/>
            <person name="Masuho Y."/>
            <person name="Yamashita R."/>
            <person name="Nakai K."/>
            <person name="Yada T."/>
            <person name="Nakamura Y."/>
            <person name="Ohara O."/>
            <person name="Isogai T."/>
            <person name="Sugano S."/>
        </authorList>
    </citation>
    <scope>NUCLEOTIDE SEQUENCE [LARGE SCALE MRNA] (ISOFORM 2)</scope>
    <scope>NUCLEOTIDE SEQUENCE [LARGE SCALE MRNA] OF 339-577 (ISOFORM 1)</scope>
</reference>
<reference key="3">
    <citation type="journal article" date="2007" name="BMC Genomics">
        <title>The full-ORF clone resource of the German cDNA consortium.</title>
        <authorList>
            <person name="Bechtel S."/>
            <person name="Rosenfelder H."/>
            <person name="Duda A."/>
            <person name="Schmidt C.P."/>
            <person name="Ernst U."/>
            <person name="Wellenreuther R."/>
            <person name="Mehrle A."/>
            <person name="Schuster C."/>
            <person name="Bahr A."/>
            <person name="Bloecker H."/>
            <person name="Heubner D."/>
            <person name="Hoerlein A."/>
            <person name="Michel G."/>
            <person name="Wedler H."/>
            <person name="Koehrer K."/>
            <person name="Ottenwaelder B."/>
            <person name="Poustka A."/>
            <person name="Wiemann S."/>
            <person name="Schupp I."/>
        </authorList>
    </citation>
    <scope>NUCLEOTIDE SEQUENCE [LARGE SCALE MRNA] (ISOFORM 1)</scope>
    <source>
        <tissue>Lymph node</tissue>
    </source>
</reference>
<reference key="4">
    <citation type="journal article" date="2006" name="Nature">
        <title>The DNA sequence, annotation and analysis of human chromosome 3.</title>
        <authorList>
            <person name="Muzny D.M."/>
            <person name="Scherer S.E."/>
            <person name="Kaul R."/>
            <person name="Wang J."/>
            <person name="Yu J."/>
            <person name="Sudbrak R."/>
            <person name="Buhay C.J."/>
            <person name="Chen R."/>
            <person name="Cree A."/>
            <person name="Ding Y."/>
            <person name="Dugan-Rocha S."/>
            <person name="Gill R."/>
            <person name="Gunaratne P."/>
            <person name="Harris R.A."/>
            <person name="Hawes A.C."/>
            <person name="Hernandez J."/>
            <person name="Hodgson A.V."/>
            <person name="Hume J."/>
            <person name="Jackson A."/>
            <person name="Khan Z.M."/>
            <person name="Kovar-Smith C."/>
            <person name="Lewis L.R."/>
            <person name="Lozado R.J."/>
            <person name="Metzker M.L."/>
            <person name="Milosavljevic A."/>
            <person name="Miner G.R."/>
            <person name="Morgan M.B."/>
            <person name="Nazareth L.V."/>
            <person name="Scott G."/>
            <person name="Sodergren E."/>
            <person name="Song X.-Z."/>
            <person name="Steffen D."/>
            <person name="Wei S."/>
            <person name="Wheeler D.A."/>
            <person name="Wright M.W."/>
            <person name="Worley K.C."/>
            <person name="Yuan Y."/>
            <person name="Zhang Z."/>
            <person name="Adams C.Q."/>
            <person name="Ansari-Lari M.A."/>
            <person name="Ayele M."/>
            <person name="Brown M.J."/>
            <person name="Chen G."/>
            <person name="Chen Z."/>
            <person name="Clendenning J."/>
            <person name="Clerc-Blankenburg K.P."/>
            <person name="Chen R."/>
            <person name="Chen Z."/>
            <person name="Davis C."/>
            <person name="Delgado O."/>
            <person name="Dinh H.H."/>
            <person name="Dong W."/>
            <person name="Draper H."/>
            <person name="Ernst S."/>
            <person name="Fu G."/>
            <person name="Gonzalez-Garay M.L."/>
            <person name="Garcia D.K."/>
            <person name="Gillett W."/>
            <person name="Gu J."/>
            <person name="Hao B."/>
            <person name="Haugen E."/>
            <person name="Havlak P."/>
            <person name="He X."/>
            <person name="Hennig S."/>
            <person name="Hu S."/>
            <person name="Huang W."/>
            <person name="Jackson L.R."/>
            <person name="Jacob L.S."/>
            <person name="Kelly S.H."/>
            <person name="Kube M."/>
            <person name="Levy R."/>
            <person name="Li Z."/>
            <person name="Liu B."/>
            <person name="Liu J."/>
            <person name="Liu W."/>
            <person name="Lu J."/>
            <person name="Maheshwari M."/>
            <person name="Nguyen B.-V."/>
            <person name="Okwuonu G.O."/>
            <person name="Palmeiri A."/>
            <person name="Pasternak S."/>
            <person name="Perez L.M."/>
            <person name="Phelps K.A."/>
            <person name="Plopper F.J."/>
            <person name="Qiang B."/>
            <person name="Raymond C."/>
            <person name="Rodriguez R."/>
            <person name="Saenphimmachak C."/>
            <person name="Santibanez J."/>
            <person name="Shen H."/>
            <person name="Shen Y."/>
            <person name="Subramanian S."/>
            <person name="Tabor P.E."/>
            <person name="Verduzco D."/>
            <person name="Waldron L."/>
            <person name="Wang J."/>
            <person name="Wang J."/>
            <person name="Wang Q."/>
            <person name="Williams G.A."/>
            <person name="Wong G.K.-S."/>
            <person name="Yao Z."/>
            <person name="Zhang J."/>
            <person name="Zhang X."/>
            <person name="Zhao G."/>
            <person name="Zhou J."/>
            <person name="Zhou Y."/>
            <person name="Nelson D."/>
            <person name="Lehrach H."/>
            <person name="Reinhardt R."/>
            <person name="Naylor S.L."/>
            <person name="Yang H."/>
            <person name="Olson M."/>
            <person name="Weinstock G."/>
            <person name="Gibbs R.A."/>
        </authorList>
    </citation>
    <scope>NUCLEOTIDE SEQUENCE [LARGE SCALE GENOMIC DNA]</scope>
</reference>
<reference key="5">
    <citation type="submission" date="2005-09" db="EMBL/GenBank/DDBJ databases">
        <authorList>
            <person name="Mural R.J."/>
            <person name="Istrail S."/>
            <person name="Sutton G.G."/>
            <person name="Florea L."/>
            <person name="Halpern A.L."/>
            <person name="Mobarry C.M."/>
            <person name="Lippert R."/>
            <person name="Walenz B."/>
            <person name="Shatkay H."/>
            <person name="Dew I."/>
            <person name="Miller J.R."/>
            <person name="Flanigan M.J."/>
            <person name="Edwards N.J."/>
            <person name="Bolanos R."/>
            <person name="Fasulo D."/>
            <person name="Halldorsson B.V."/>
            <person name="Hannenhalli S."/>
            <person name="Turner R."/>
            <person name="Yooseph S."/>
            <person name="Lu F."/>
            <person name="Nusskern D.R."/>
            <person name="Shue B.C."/>
            <person name="Zheng X.H."/>
            <person name="Zhong F."/>
            <person name="Delcher A.L."/>
            <person name="Huson D.H."/>
            <person name="Kravitz S.A."/>
            <person name="Mouchard L."/>
            <person name="Reinert K."/>
            <person name="Remington K.A."/>
            <person name="Clark A.G."/>
            <person name="Waterman M.S."/>
            <person name="Eichler E.E."/>
            <person name="Adams M.D."/>
            <person name="Hunkapiller M.W."/>
            <person name="Myers E.W."/>
            <person name="Venter J.C."/>
        </authorList>
    </citation>
    <scope>NUCLEOTIDE SEQUENCE [LARGE SCALE GENOMIC DNA]</scope>
</reference>
<reference key="6">
    <citation type="journal article" date="2004" name="Genome Res.">
        <title>The status, quality, and expansion of the NIH full-length cDNA project: the Mammalian Gene Collection (MGC).</title>
        <authorList>
            <consortium name="The MGC Project Team"/>
        </authorList>
    </citation>
    <scope>NUCLEOTIDE SEQUENCE [LARGE SCALE MRNA] (ISOFORM 1)</scope>
    <source>
        <tissue>Brain</tissue>
        <tissue>Uterus</tissue>
    </source>
</reference>
<reference key="7">
    <citation type="journal article" date="2005" name="Mol. Cell. Biol.">
        <title>A human protein complex homologous to the Drosophila MSL complex is responsible for the majority of histone H4 acetylation at lysine 16.</title>
        <authorList>
            <person name="Smith E.R."/>
            <person name="Cayrou C."/>
            <person name="Huang R."/>
            <person name="Lane W.S."/>
            <person name="Cote J."/>
            <person name="Lucchesi J.C."/>
        </authorList>
    </citation>
    <scope>SUBCELLULAR LOCATION</scope>
    <scope>IDENTIFICATION IN THE MSL COMPLEX</scope>
    <scope>IDENTIFICATION BY MASS SPECTROMETRY</scope>
</reference>
<reference key="8">
    <citation type="journal article" date="2006" name="Mol. Cell. Biol.">
        <authorList>
            <person name="Smith E.R."/>
            <person name="Cayrou C."/>
            <person name="Huang R."/>
            <person name="Lane W.S."/>
            <person name="Cote J."/>
            <person name="Lucchesi J.C."/>
        </authorList>
    </citation>
    <scope>ERRATUM OF PUBMED:16227571</scope>
</reference>
<reference key="9">
    <citation type="journal article" date="2006" name="Mol. Cell">
        <title>Nuclear pore components are involved in the transcriptional regulation of dosage compensation in Drosophila.</title>
        <authorList>
            <person name="Mendjan S."/>
            <person name="Taipale M."/>
            <person name="Kind J."/>
            <person name="Holz H."/>
            <person name="Gebhardt P."/>
            <person name="Schelder M."/>
            <person name="Vermeulen M."/>
            <person name="Buscaino A."/>
            <person name="Duncan K."/>
            <person name="Mueller J."/>
            <person name="Wilm M."/>
            <person name="Stunnenberg H.G."/>
            <person name="Saumweber H."/>
            <person name="Akhtar A."/>
        </authorList>
    </citation>
    <scope>FUNCTION</scope>
    <scope>IDENTIFICATION IN THE MSL COMPLEX</scope>
</reference>
<reference key="10">
    <citation type="journal article" date="2009" name="J. Biol. Chem.">
        <title>MSL2 promotes Mdm2-independent cytoplasmic localization of p53.</title>
        <authorList>
            <person name="Kruse J.P."/>
            <person name="Gu W."/>
        </authorList>
    </citation>
    <scope>FUNCTION</scope>
    <scope>CATALYTIC ACTIVITY</scope>
</reference>
<reference key="11">
    <citation type="journal article" date="2011" name="Mol. Cell">
        <title>The RING finger protein MSL2 in the MOF complex is an E3 ubiquitin ligase for H2B K34 and is involved in crosstalk with H3 K4 and K79 methylation.</title>
        <authorList>
            <person name="Wu L."/>
            <person name="Zee B.M."/>
            <person name="Wang Y."/>
            <person name="Garcia B.A."/>
            <person name="Dou Y."/>
        </authorList>
    </citation>
    <scope>FUNCTION AS E3 UBIQUITIN LIGASE</scope>
    <scope>CATALYTIC ACTIVITY</scope>
    <scope>PATHWAY</scope>
    <scope>SUBCELLULAR LOCATION</scope>
    <scope>MUTAGENESIS OF HIS-64</scope>
</reference>
<reference key="12">
    <citation type="journal article" date="2013" name="J. Proteome Res.">
        <title>Toward a comprehensive characterization of a human cancer cell phosphoproteome.</title>
        <authorList>
            <person name="Zhou H."/>
            <person name="Di Palma S."/>
            <person name="Preisinger C."/>
            <person name="Peng M."/>
            <person name="Polat A.N."/>
            <person name="Heck A.J."/>
            <person name="Mohammed S."/>
        </authorList>
    </citation>
    <scope>PHOSPHORYLATION [LARGE SCALE ANALYSIS] AT SER-447</scope>
    <scope>IDENTIFICATION BY MASS SPECTROMETRY [LARGE SCALE ANALYSIS]</scope>
    <source>
        <tissue>Cervix carcinoma</tissue>
        <tissue>Erythroleukemia</tissue>
    </source>
</reference>
<reference key="13">
    <citation type="journal article" date="2013" name="PLoS ONE">
        <title>Msl2 is a novel component of the vertebrate DNA damage response.</title>
        <authorList>
            <person name="Lai Z."/>
            <person name="Moravcova S."/>
            <person name="Canitrot Y."/>
            <person name="Andrzejewski L.P."/>
            <person name="Walshe D.M."/>
            <person name="Rea S."/>
        </authorList>
    </citation>
    <scope>FUNCTION</scope>
    <scope>CATALYTIC ACTIVITY</scope>
    <scope>PATHWAY</scope>
</reference>
<reference key="14">
    <citation type="journal article" date="2014" name="Nat. Struct. Mol. Biol.">
        <title>Uncovering global SUMOylation signaling networks in a site-specific manner.</title>
        <authorList>
            <person name="Hendriks I.A."/>
            <person name="D'Souza R.C."/>
            <person name="Yang B."/>
            <person name="Verlaan-de Vries M."/>
            <person name="Mann M."/>
            <person name="Vertegaal A.C."/>
        </authorList>
    </citation>
    <scope>SUMOYLATION [LARGE SCALE ANALYSIS] AT LYS-375</scope>
    <scope>IDENTIFICATION BY MASS SPECTROMETRY [LARGE SCALE ANALYSIS]</scope>
</reference>
<reference key="15">
    <citation type="journal article" date="2017" name="Nat. Struct. Mol. Biol.">
        <title>Site-specific mapping of the human SUMO proteome reveals co-modification with phosphorylation.</title>
        <authorList>
            <person name="Hendriks I.A."/>
            <person name="Lyon D."/>
            <person name="Young C."/>
            <person name="Jensen L.J."/>
            <person name="Vertegaal A.C."/>
            <person name="Nielsen M.L."/>
        </authorList>
    </citation>
    <scope>SUMOYLATION [LARGE SCALE ANALYSIS] AT LYS-375</scope>
    <scope>IDENTIFICATION BY MASS SPECTROMETRY [LARGE SCALE ANALYSIS]</scope>
</reference>
<reference key="16">
    <citation type="journal article" date="2019" name="Arch. Biochem. Biophys.">
        <title>Analysis of histone ubiquitylation by MSL1/MSL2 proteins in vitro.</title>
        <authorList>
            <person name="Krajewski W.A."/>
            <person name="Vassiliev O.L."/>
        </authorList>
    </citation>
    <scope>FUNCTION</scope>
    <scope>CATALYTIC ACTIVITY</scope>
    <scope>PATHWAY</scope>
</reference>
<reference key="17">
    <citation type="journal article" date="2021" name="Nat. Cell Biol.">
        <title>Disruption of the MSL complex inhibits tumour maintenance by exacerbating chromosomal instability.</title>
        <authorList>
            <person name="Monserrat J."/>
            <person name="Morales Torres C."/>
            <person name="Richardson L."/>
            <person name="Wilson T.S."/>
            <person name="Patel H."/>
            <person name="Domart M.C."/>
            <person name="Horswell S."/>
            <person name="Song O.R."/>
            <person name="Jiang M."/>
            <person name="Crawford M."/>
            <person name="Bui M."/>
            <person name="Dalal Y."/>
            <person name="Scaffidi P."/>
        </authorList>
    </citation>
    <scope>FUNCTION</scope>
    <scope>IDENTIFICATION IN THE MSL COMPLEX</scope>
</reference>
<reference key="18">
    <citation type="journal article" date="2012" name="Mol. Cell">
        <title>Msl1-mediated dimerization of the dosage compensation complex is essential for male X-chromosome regulation in Drosophila.</title>
        <authorList>
            <person name="Hallacli E."/>
            <person name="Lipp M."/>
            <person name="Georgiev P."/>
            <person name="Spielman C."/>
            <person name="Cusack S."/>
            <person name="Akhtar A."/>
            <person name="Kadlec J."/>
        </authorList>
    </citation>
    <scope>X-RAY CRYSTALLOGRAPHY (3.25 ANGSTROMS) OF 1-116 IN COMPLEX WITH MSL1 AND ZINC IONS</scope>
    <scope>SUBUNIT</scope>
    <scope>INTERACTION WITH MSL1</scope>
</reference>
<reference key="19">
    <citation type="journal article" date="2024" name="Am. J. Hum. Genet.">
        <title>MSL2 variants lead to a neurodevelopmental syndrome with lack of coordination, epilepsy, specific dysmorphisms, and a distinct episignature.</title>
        <authorList>
            <person name="Karayol R."/>
            <person name="Borroto M.C."/>
            <person name="Haghshenas S."/>
            <person name="Namasivayam A."/>
            <person name="Reilly J."/>
            <person name="Levy M.A."/>
            <person name="Relator R."/>
            <person name="Kerkhof J."/>
            <person name="McConkey H."/>
            <person name="Shvedunova M."/>
            <person name="Petersen A.K."/>
            <person name="Magnussen K."/>
            <person name="Zweier C."/>
            <person name="Vasileiou G."/>
            <person name="Reis A."/>
            <person name="Savatt J.M."/>
            <person name="Mulligan M.R."/>
            <person name="Bicknell L.S."/>
            <person name="Poke G."/>
            <person name="Abu-El-Haija A."/>
            <person name="Duis J."/>
            <person name="Hannig V."/>
            <person name="Srivastava S."/>
            <person name="Barkoudah E."/>
            <person name="Hauser N.S."/>
            <person name="van den Born M."/>
            <person name="Hamiel U."/>
            <person name="Henig N."/>
            <person name="Baris Feldman H."/>
            <person name="McKee S."/>
            <person name="Krapels I.P.C."/>
            <person name="Lei Y."/>
            <person name="Todorova A."/>
            <person name="Yordanova R."/>
            <person name="Atemin S."/>
            <person name="Rogac M."/>
            <person name="McConnell V."/>
            <person name="Chassevent A."/>
            <person name="Baranano K.W."/>
            <person name="Shashi V."/>
            <person name="Sullivan J.A."/>
            <person name="Peron A."/>
            <person name="Iascone M."/>
            <person name="Canevini M.P."/>
            <person name="Friedman J."/>
            <person name="Reyes I.A."/>
            <person name="Kierstein J."/>
            <person name="Shen J.J."/>
            <person name="Ahmed F.N."/>
            <person name="Mao X."/>
            <person name="Almoguera B."/>
            <person name="Blanco-Kelly F."/>
            <person name="Platzer K."/>
            <person name="Treu A.B."/>
            <person name="Quilichini J."/>
            <person name="Bourgois A."/>
            <person name="Chatron N."/>
            <person name="Januel L."/>
            <person name="Rougeot C."/>
            <person name="Carere D.A."/>
            <person name="Monaghan K.G."/>
            <person name="Rousseau J."/>
            <person name="Myers K.A."/>
            <person name="Sadikovic B."/>
            <person name="Akhtar A."/>
            <person name="Campeau P.M."/>
        </authorList>
    </citation>
    <scope>VARIANTS KBHS LEU-15; 171-GLN--CYS-577 DEL; VAL-317 AND 353-GLN--CYS-577 DEL</scope>
    <scope>INVOLVEMENT IN KBHS</scope>
</reference>
<dbReference type="EC" id="2.3.2.27" evidence="8 9 11 12"/>
<dbReference type="EMBL" id="AB046805">
    <property type="protein sequence ID" value="BAB13411.1"/>
    <property type="status" value="ALT_INIT"/>
    <property type="molecule type" value="mRNA"/>
</dbReference>
<dbReference type="EMBL" id="AK001408">
    <property type="protein sequence ID" value="BAA91673.1"/>
    <property type="status" value="ALT_INIT"/>
    <property type="molecule type" value="mRNA"/>
</dbReference>
<dbReference type="EMBL" id="AK302491">
    <property type="protein sequence ID" value="BAG63776.1"/>
    <property type="molecule type" value="mRNA"/>
</dbReference>
<dbReference type="EMBL" id="AL834289">
    <property type="protein sequence ID" value="CAD38963.2"/>
    <property type="molecule type" value="mRNA"/>
</dbReference>
<dbReference type="EMBL" id="AC092991">
    <property type="status" value="NOT_ANNOTATED_CDS"/>
    <property type="molecule type" value="Genomic_DNA"/>
</dbReference>
<dbReference type="EMBL" id="CH471052">
    <property type="protein sequence ID" value="EAW79119.1"/>
    <property type="molecule type" value="Genomic_DNA"/>
</dbReference>
<dbReference type="EMBL" id="CH471052">
    <property type="protein sequence ID" value="EAW79120.1"/>
    <property type="molecule type" value="Genomic_DNA"/>
</dbReference>
<dbReference type="EMBL" id="BC032719">
    <property type="protein sequence ID" value="AAH32719.1"/>
    <property type="status" value="ALT_INIT"/>
    <property type="molecule type" value="mRNA"/>
</dbReference>
<dbReference type="EMBL" id="BC093764">
    <property type="protein sequence ID" value="AAH93764.1"/>
    <property type="molecule type" value="mRNA"/>
</dbReference>
<dbReference type="EMBL" id="BC093790">
    <property type="protein sequence ID" value="AAH93790.1"/>
    <property type="molecule type" value="mRNA"/>
</dbReference>
<dbReference type="CCDS" id="CCDS33861.1">
    <molecule id="Q9HCI7-1"/>
</dbReference>
<dbReference type="CCDS" id="CCDS46922.1">
    <molecule id="Q9HCI7-2"/>
</dbReference>
<dbReference type="RefSeq" id="NP_001138889.1">
    <molecule id="Q9HCI7-2"/>
    <property type="nucleotide sequence ID" value="NM_001145417.2"/>
</dbReference>
<dbReference type="RefSeq" id="NP_060603.2">
    <molecule id="Q9HCI7-1"/>
    <property type="nucleotide sequence ID" value="NM_018133.3"/>
</dbReference>
<dbReference type="RefSeq" id="XP_005247628.1">
    <molecule id="Q9HCI7-2"/>
    <property type="nucleotide sequence ID" value="XM_005247571.4"/>
</dbReference>
<dbReference type="RefSeq" id="XP_006713747.1">
    <property type="nucleotide sequence ID" value="XM_006713684.3"/>
</dbReference>
<dbReference type="RefSeq" id="XP_011511251.1">
    <molecule id="Q9HCI7-2"/>
    <property type="nucleotide sequence ID" value="XM_011512949.3"/>
</dbReference>
<dbReference type="RefSeq" id="XP_054203043.1">
    <molecule id="Q9HCI7-2"/>
    <property type="nucleotide sequence ID" value="XM_054347068.1"/>
</dbReference>
<dbReference type="RefSeq" id="XP_054203044.1">
    <molecule id="Q9HCI7-2"/>
    <property type="nucleotide sequence ID" value="XM_054347069.1"/>
</dbReference>
<dbReference type="PDB" id="4B7Y">
    <property type="method" value="X-ray"/>
    <property type="resolution" value="3.25 A"/>
    <property type="chains" value="C/D=1-116"/>
</dbReference>
<dbReference type="PDB" id="4B86">
    <property type="method" value="X-ray"/>
    <property type="resolution" value="3.50 A"/>
    <property type="chains" value="C/D/G/H/K/L=1-116"/>
</dbReference>
<dbReference type="PDBsum" id="4B7Y"/>
<dbReference type="PDBsum" id="4B86"/>
<dbReference type="SMR" id="Q9HCI7"/>
<dbReference type="BioGRID" id="120467">
    <property type="interactions" value="41"/>
</dbReference>
<dbReference type="ComplexPortal" id="CPX-815">
    <property type="entry name" value="MSL histone acetyltransferase complex"/>
</dbReference>
<dbReference type="CORUM" id="Q9HCI7"/>
<dbReference type="FunCoup" id="Q9HCI7">
    <property type="interactions" value="3121"/>
</dbReference>
<dbReference type="IntAct" id="Q9HCI7">
    <property type="interactions" value="23"/>
</dbReference>
<dbReference type="MINT" id="Q9HCI7"/>
<dbReference type="STRING" id="9606.ENSP00000311827"/>
<dbReference type="iPTMnet" id="Q9HCI7"/>
<dbReference type="PhosphoSitePlus" id="Q9HCI7"/>
<dbReference type="BioMuta" id="MSL2"/>
<dbReference type="DMDM" id="158564022"/>
<dbReference type="jPOST" id="Q9HCI7"/>
<dbReference type="MassIVE" id="Q9HCI7"/>
<dbReference type="PaxDb" id="9606-ENSP00000311827"/>
<dbReference type="PeptideAtlas" id="Q9HCI7"/>
<dbReference type="ProteomicsDB" id="33946"/>
<dbReference type="ProteomicsDB" id="81733">
    <molecule id="Q9HCI7-1"/>
</dbReference>
<dbReference type="Pumba" id="Q9HCI7"/>
<dbReference type="Antibodypedia" id="1091">
    <property type="antibodies" value="174 antibodies from 23 providers"/>
</dbReference>
<dbReference type="DNASU" id="55167"/>
<dbReference type="Ensembl" id="ENST00000309993.3">
    <molecule id="Q9HCI7-1"/>
    <property type="protein sequence ID" value="ENSP00000311827.2"/>
    <property type="gene ID" value="ENSG00000174579.5"/>
</dbReference>
<dbReference type="Ensembl" id="ENST00000434835.2">
    <molecule id="Q9HCI7-2"/>
    <property type="protein sequence ID" value="ENSP00000387948.2"/>
    <property type="gene ID" value="ENSG00000174579.5"/>
</dbReference>
<dbReference type="Ensembl" id="ENST00000473093.2">
    <molecule id="Q9HCI7-2"/>
    <property type="protein sequence ID" value="ENSP00000418655.2"/>
    <property type="gene ID" value="ENSG00000174579.5"/>
</dbReference>
<dbReference type="Ensembl" id="ENST00000481989.2">
    <molecule id="Q9HCI7-2"/>
    <property type="protein sequence ID" value="ENSP00000418752.2"/>
    <property type="gene ID" value="ENSG00000174579.5"/>
</dbReference>
<dbReference type="Ensembl" id="ENST00000491050.2">
    <molecule id="Q9HCI7-2"/>
    <property type="protein sequence ID" value="ENSP00000417956.2"/>
    <property type="gene ID" value="ENSG00000174579.5"/>
</dbReference>
<dbReference type="Ensembl" id="ENST00000703103.1">
    <molecule id="Q9HCI7-2"/>
    <property type="protein sequence ID" value="ENSP00000515170.1"/>
    <property type="gene ID" value="ENSG00000174579.5"/>
</dbReference>
<dbReference type="Ensembl" id="ENST00000703104.1">
    <molecule id="Q9HCI7-2"/>
    <property type="protein sequence ID" value="ENSP00000515171.1"/>
    <property type="gene ID" value="ENSG00000174579.5"/>
</dbReference>
<dbReference type="GeneID" id="55167"/>
<dbReference type="KEGG" id="hsa:55167"/>
<dbReference type="MANE-Select" id="ENST00000309993.3">
    <property type="protein sequence ID" value="ENSP00000311827.2"/>
    <property type="RefSeq nucleotide sequence ID" value="NM_018133.4"/>
    <property type="RefSeq protein sequence ID" value="NP_060603.2"/>
</dbReference>
<dbReference type="UCSC" id="uc003eqx.2">
    <molecule id="Q9HCI7-1"/>
    <property type="organism name" value="human"/>
</dbReference>
<dbReference type="AGR" id="HGNC:25544"/>
<dbReference type="CTD" id="55167"/>
<dbReference type="DisGeNET" id="55167"/>
<dbReference type="GeneCards" id="MSL2"/>
<dbReference type="HGNC" id="HGNC:25544">
    <property type="gene designation" value="MSL2"/>
</dbReference>
<dbReference type="HPA" id="ENSG00000174579">
    <property type="expression patterns" value="Tissue enhanced (bone)"/>
</dbReference>
<dbReference type="MalaCards" id="MSL2"/>
<dbReference type="MIM" id="614802">
    <property type="type" value="gene"/>
</dbReference>
<dbReference type="MIM" id="620985">
    <property type="type" value="phenotype"/>
</dbReference>
<dbReference type="neXtProt" id="NX_Q9HCI7"/>
<dbReference type="OpenTargets" id="ENSG00000174579"/>
<dbReference type="PharmGKB" id="PA164723152"/>
<dbReference type="VEuPathDB" id="HostDB:ENSG00000174579"/>
<dbReference type="eggNOG" id="ENOG502QPJR">
    <property type="taxonomic scope" value="Eukaryota"/>
</dbReference>
<dbReference type="GeneTree" id="ENSGT00390000016814"/>
<dbReference type="HOGENOM" id="CLU_038772_0_0_1"/>
<dbReference type="InParanoid" id="Q9HCI7"/>
<dbReference type="OMA" id="TEVCDSN"/>
<dbReference type="OrthoDB" id="10012174at2759"/>
<dbReference type="PAN-GO" id="Q9HCI7">
    <property type="GO annotations" value="4 GO annotations based on evolutionary models"/>
</dbReference>
<dbReference type="PhylomeDB" id="Q9HCI7"/>
<dbReference type="TreeFam" id="TF328848"/>
<dbReference type="PathwayCommons" id="Q9HCI7"/>
<dbReference type="Reactome" id="R-HSA-3214847">
    <property type="pathway name" value="HATs acetylate histones"/>
</dbReference>
<dbReference type="SignaLink" id="Q9HCI7"/>
<dbReference type="SIGNOR" id="Q9HCI7"/>
<dbReference type="UniPathway" id="UPA00143"/>
<dbReference type="BioGRID-ORCS" id="55167">
    <property type="hits" value="38 hits in 1203 CRISPR screens"/>
</dbReference>
<dbReference type="ChiTaRS" id="MSL2">
    <property type="organism name" value="human"/>
</dbReference>
<dbReference type="EvolutionaryTrace" id="Q9HCI7"/>
<dbReference type="GenomeRNAi" id="55167"/>
<dbReference type="Pharos" id="Q9HCI7">
    <property type="development level" value="Tbio"/>
</dbReference>
<dbReference type="PRO" id="PR:Q9HCI7"/>
<dbReference type="Proteomes" id="UP000005640">
    <property type="component" value="Chromosome 3"/>
</dbReference>
<dbReference type="RNAct" id="Q9HCI7">
    <property type="molecule type" value="protein"/>
</dbReference>
<dbReference type="Bgee" id="ENSG00000174579">
    <property type="expression patterns" value="Expressed in secondary oocyte and 194 other cell types or tissues"/>
</dbReference>
<dbReference type="ExpressionAtlas" id="Q9HCI7">
    <property type="expression patterns" value="baseline and differential"/>
</dbReference>
<dbReference type="GO" id="GO:0000785">
    <property type="term" value="C:chromatin"/>
    <property type="evidence" value="ECO:0000314"/>
    <property type="project" value="UniProtKB"/>
</dbReference>
<dbReference type="GO" id="GO:0072487">
    <property type="term" value="C:MSL complex"/>
    <property type="evidence" value="ECO:0000314"/>
    <property type="project" value="UniProtKB"/>
</dbReference>
<dbReference type="GO" id="GO:0005654">
    <property type="term" value="C:nucleoplasm"/>
    <property type="evidence" value="ECO:0000304"/>
    <property type="project" value="Reactome"/>
</dbReference>
<dbReference type="GO" id="GO:0005634">
    <property type="term" value="C:nucleus"/>
    <property type="evidence" value="ECO:0000314"/>
    <property type="project" value="ComplexPortal"/>
</dbReference>
<dbReference type="GO" id="GO:0141054">
    <property type="term" value="F:histone H2B ubiquitin ligase activity"/>
    <property type="evidence" value="ECO:0000314"/>
    <property type="project" value="UniProtKB"/>
</dbReference>
<dbReference type="GO" id="GO:0140585">
    <property type="term" value="F:promoter-enhancer loop anchoring activity"/>
    <property type="evidence" value="ECO:0000250"/>
    <property type="project" value="UniProtKB"/>
</dbReference>
<dbReference type="GO" id="GO:0061630">
    <property type="term" value="F:ubiquitin protein ligase activity"/>
    <property type="evidence" value="ECO:0000314"/>
    <property type="project" value="UniProtKB"/>
</dbReference>
<dbReference type="GO" id="GO:0008270">
    <property type="term" value="F:zinc ion binding"/>
    <property type="evidence" value="ECO:0007669"/>
    <property type="project" value="UniProtKB-KW"/>
</dbReference>
<dbReference type="GO" id="GO:0006974">
    <property type="term" value="P:DNA damage response"/>
    <property type="evidence" value="ECO:0000314"/>
    <property type="project" value="UniProtKB"/>
</dbReference>
<dbReference type="GO" id="GO:0040029">
    <property type="term" value="P:epigenetic regulation of gene expression"/>
    <property type="evidence" value="ECO:0000250"/>
    <property type="project" value="UniProtKB"/>
</dbReference>
<dbReference type="GO" id="GO:0045893">
    <property type="term" value="P:positive regulation of DNA-templated transcription"/>
    <property type="evidence" value="ECO:0000266"/>
    <property type="project" value="ComplexPortal"/>
</dbReference>
<dbReference type="GO" id="GO:0006513">
    <property type="term" value="P:protein monoubiquitination"/>
    <property type="evidence" value="ECO:0000314"/>
    <property type="project" value="UniProtKB"/>
</dbReference>
<dbReference type="GO" id="GO:0016567">
    <property type="term" value="P:protein ubiquitination"/>
    <property type="evidence" value="ECO:0000318"/>
    <property type="project" value="GO_Central"/>
</dbReference>
<dbReference type="CDD" id="cd13122">
    <property type="entry name" value="MSL2_CXC"/>
    <property type="match status" value="1"/>
</dbReference>
<dbReference type="CDD" id="cd16522">
    <property type="entry name" value="RING-HC_MSL2"/>
    <property type="match status" value="1"/>
</dbReference>
<dbReference type="FunFam" id="3.30.40.10:FF:000174">
    <property type="entry name" value="E3 ubiquitin-protein ligase MSL2"/>
    <property type="match status" value="1"/>
</dbReference>
<dbReference type="Gene3D" id="3.30.40.10">
    <property type="entry name" value="Zinc/RING finger domain, C3HC4 (zinc finger)"/>
    <property type="match status" value="1"/>
</dbReference>
<dbReference type="InterPro" id="IPR037922">
    <property type="entry name" value="MSL2"/>
</dbReference>
<dbReference type="InterPro" id="IPR032049">
    <property type="entry name" value="Msl2-CXC"/>
</dbReference>
<dbReference type="InterPro" id="IPR032043">
    <property type="entry name" value="Msl2_Znf-RING"/>
</dbReference>
<dbReference type="InterPro" id="IPR033467">
    <property type="entry name" value="Tesmin/TSO1-like_CXC"/>
</dbReference>
<dbReference type="InterPro" id="IPR001841">
    <property type="entry name" value="Znf_RING"/>
</dbReference>
<dbReference type="InterPro" id="IPR013083">
    <property type="entry name" value="Znf_RING/FYVE/PHD"/>
</dbReference>
<dbReference type="PANTHER" id="PTHR16048:SF3">
    <property type="entry name" value="E3 UBIQUITIN-PROTEIN LIGASE MSL2"/>
    <property type="match status" value="1"/>
</dbReference>
<dbReference type="PANTHER" id="PTHR16048">
    <property type="entry name" value="MSL2-RELATED"/>
    <property type="match status" value="1"/>
</dbReference>
<dbReference type="Pfam" id="PF16682">
    <property type="entry name" value="MSL2-CXC"/>
    <property type="match status" value="1"/>
</dbReference>
<dbReference type="Pfam" id="PF16685">
    <property type="entry name" value="zf-RING_10"/>
    <property type="match status" value="1"/>
</dbReference>
<dbReference type="SMART" id="SM01114">
    <property type="entry name" value="CXC"/>
    <property type="match status" value="1"/>
</dbReference>
<dbReference type="SUPFAM" id="SSF57850">
    <property type="entry name" value="RING/U-box"/>
    <property type="match status" value="1"/>
</dbReference>
<dbReference type="PROSITE" id="PS52051">
    <property type="entry name" value="CXC_MSL2"/>
    <property type="match status" value="1"/>
</dbReference>
<dbReference type="PROSITE" id="PS50089">
    <property type="entry name" value="ZF_RING_2"/>
    <property type="match status" value="1"/>
</dbReference>
<sequence length="577" mass="62541">MNPVNATALYISASRLVLNYDPGDPKAFTEINRLLPYFRQSLSCCVCGHLLQDPIAPTNSTCQHYVCKTCKGKKMMMKPSCSWCKDYEQFEENKQLSILVNCYKKLCEYITQTTLARDIIEAVDCSSDILALLNDGSLFCEETEKPSDSSFTLCLTHSPLPSTSEPTTDPQASLSPMSESTLSIAIGSSVINGLPTYNGLSIDRFGINIPSPEHSNTIDVCNTVDIKTEDLSDSLPPVCDTVATDLCSTGIDICSFSEDIKPGDSLLLSVEEVLRSLETVSNTEVCCPNLQPNLEATVSNGPFLQLSSQSLSHNVFMSTSPALHGLSCTAATPKIAKLNRKRSRSESDSEKVQPLPISTIIRGPTLGASAPVTVKRESKISLQPIATVPNGGTTPKISKTVLLSTKSMKKSHEHGSKKSHSKTKPGILKKDKAVKEKIPSHHFMPGSPTKTVYKKPQEKKGCKCGRATQNPSVLTCRGQRCPCYSNRKACLDCICRGCQNSYMANGEKKLEAFAVPEKALEQTRLTLGINVTSIAVRNASTSTSVINVTGSPVTTFLAASTHDDKSLDEAIDMRFDC</sequence>
<comment type="function">
    <text evidence="1 2 7 8 9 11 12 13">Non-catalytic component of the MSL histone acetyltransferase complex, a multiprotein complex that mediates the majority of histone H4 acetylation at 'Lys-16' (H4K16ac), an epigenetic mark that prevents chromatin compaction (PubMed:16543150, PubMed:33837287). The MSL complex is required for chromosome stability and genome integrity by maintaining homeostatic levels of H4K16ac (PubMed:33837287). The MSL complex is also involved in gene dosage by promoting up-regulation of genes expressed by the X chromosome (By similarity). X up-regulation is required to compensate for autosomal biallelic expression (By similarity). The MSL complex also participates in gene dosage compensation by promoting expression of Tsix non-coding RNA (By similarity). MSL2 plays a key role in gene dosage by ensuring biallelic expression of a subset of dosage-sensitive genes, including many haploinsufficient genes (By similarity). Acts by promoting promoter-enhancer contacts, thereby preventing DNA methylation of one allele and creating a methylation-free environment for methylation-sensitive transcription factors such as SP1, KANSL1 and KANSL3 (By similarity). Also acts as an E3 ubiquitin ligase that promotes monoubiquitination of histone H2B at 'Lys-35' (H2BK34Ub), but not that of H2A (PubMed:21726816, PubMed:30930284). This activity is greatly enhanced by heterodimerization with MSL1 (PubMed:21726816, PubMed:30930284). H2B ubiquitination in turn stimulates histone H3 methylation at 'Lys-4' (H3K4me) and 'Lys-79' (H3K79me) and leads to gene activation, including that of HOXA9 and MEIS1 (PubMed:21726816). Also involved in the DNA damage response by mediating ubiquitination of TP53/p53 and TP53BP1 (PubMed:19033443, PubMed:23874665).</text>
</comment>
<comment type="catalytic activity">
    <reaction evidence="8 9 11 12">
        <text>S-ubiquitinyl-[E2 ubiquitin-conjugating enzyme]-L-cysteine + [acceptor protein]-L-lysine = [E2 ubiquitin-conjugating enzyme]-L-cysteine + N(6)-ubiquitinyl-[acceptor protein]-L-lysine.</text>
        <dbReference type="EC" id="2.3.2.27"/>
    </reaction>
</comment>
<comment type="pathway">
    <text evidence="8 9 11 12">Protein modification; protein ubiquitination.</text>
</comment>
<comment type="subunit">
    <text evidence="7 10 13">Component of a multisubunit histone acetyltransferase complex (MSL) at least composed of the KAT8/MOF/MYST1, MSL1/hampin, MSL2 and MSL3 (PubMed:16543150, PubMed:23084835, PubMed:33837287). Forms a MSL heterotetrameric core with MSL1 (PubMed:16543150).</text>
</comment>
<comment type="interaction">
    <interactant intactId="EBI-2560775">
        <id>Q9HCI7</id>
    </interactant>
    <interactant intactId="EBI-2560816">
        <id>Q68DK7</id>
        <label>MSL1</label>
    </interactant>
    <organismsDiffer>false</organismsDiffer>
    <experiments>3</experiments>
</comment>
<comment type="subcellular location">
    <subcellularLocation>
        <location evidence="6">Nucleus</location>
    </subcellularLocation>
    <subcellularLocation>
        <location evidence="9">Chromosome</location>
    </subcellularLocation>
    <text evidence="1">Associates with both promoters and enhancers of target genes, maintaining promoter-enhancer contacts.</text>
</comment>
<comment type="alternative products">
    <event type="alternative splicing"/>
    <isoform>
        <id>Q9HCI7-1</id>
        <name>1</name>
        <sequence type="displayed"/>
    </isoform>
    <isoform>
        <id>Q9HCI7-2</id>
        <name>2</name>
        <sequence type="described" ref="VSP_046200"/>
    </isoform>
</comment>
<comment type="disease" evidence="14">
    <disease id="DI-06960">
        <name>Karayol-Borroto-Haghshenas neurodevelopmental syndrome</name>
        <acronym>KBHS</acronym>
        <description>An autosomal dominant neurodevelopmental disorder characterized by global developmental delay, intellectual disability, psychiatric manifestations including autism spectrum disorder and attention deficit, dysmorphic features, and motor issues such as coordination problems, feeding difficulties, and gait disturbance.</description>
        <dbReference type="MIM" id="620985"/>
    </disease>
    <text>The disease is caused by variants affecting the gene represented in this entry.</text>
</comment>
<comment type="similarity">
    <text evidence="18">Belongs to the MSL2 family.</text>
</comment>
<comment type="sequence caution" evidence="18">
    <conflict type="erroneous initiation">
        <sequence resource="EMBL-CDS" id="AAH32719"/>
    </conflict>
    <text>Extended N-terminus.</text>
</comment>
<comment type="sequence caution" evidence="18">
    <conflict type="erroneous initiation">
        <sequence resource="EMBL-CDS" id="BAA91673"/>
    </conflict>
    <text>Truncated N-terminus.</text>
</comment>
<comment type="sequence caution" evidence="18">
    <conflict type="erroneous initiation">
        <sequence resource="EMBL-CDS" id="BAB13411"/>
    </conflict>
    <text>Extended N-terminus.</text>
</comment>
<organism>
    <name type="scientific">Homo sapiens</name>
    <name type="common">Human</name>
    <dbReference type="NCBI Taxonomy" id="9606"/>
    <lineage>
        <taxon>Eukaryota</taxon>
        <taxon>Metazoa</taxon>
        <taxon>Chordata</taxon>
        <taxon>Craniata</taxon>
        <taxon>Vertebrata</taxon>
        <taxon>Euteleostomi</taxon>
        <taxon>Mammalia</taxon>
        <taxon>Eutheria</taxon>
        <taxon>Euarchontoglires</taxon>
        <taxon>Primates</taxon>
        <taxon>Haplorrhini</taxon>
        <taxon>Catarrhini</taxon>
        <taxon>Hominidae</taxon>
        <taxon>Homo</taxon>
    </lineage>
</organism>
<protein>
    <recommendedName>
        <fullName evidence="18">E3 ubiquitin-protein ligase MSL2</fullName>
        <ecNumber evidence="8 9 11 12">2.3.2.27</ecNumber>
    </recommendedName>
    <alternativeName>
        <fullName>Male-specific lethal 2-like 1</fullName>
        <shortName>MSL2-like 1</shortName>
    </alternativeName>
    <alternativeName>
        <fullName evidence="17">Male-specific lethal-2 homolog</fullName>
        <shortName evidence="17">MSL-2</shortName>
    </alternativeName>
    <alternativeName>
        <fullName>Male-specific lethal-2 homolog 1</fullName>
    </alternativeName>
    <alternativeName>
        <fullName>RING finger protein 184</fullName>
    </alternativeName>
</protein>
<accession>Q9HCI7</accession>
<accession>B4DYL4</accession>
<accession>G5E9I1</accession>
<accession>Q0D2P1</accession>
<accession>Q8NDB4</accession>
<accession>Q9NVS4</accession>
<evidence type="ECO:0000250" key="1">
    <source>
        <dbReference type="UniProtKB" id="Q69ZF8"/>
    </source>
</evidence>
<evidence type="ECO:0000250" key="2">
    <source>
        <dbReference type="UniProtKB" id="Q9D1P2"/>
    </source>
</evidence>
<evidence type="ECO:0000255" key="3">
    <source>
        <dbReference type="PROSITE-ProRule" id="PRU00175"/>
    </source>
</evidence>
<evidence type="ECO:0000255" key="4">
    <source>
        <dbReference type="PROSITE-ProRule" id="PRU01396"/>
    </source>
</evidence>
<evidence type="ECO:0000256" key="5">
    <source>
        <dbReference type="SAM" id="MobiDB-lite"/>
    </source>
</evidence>
<evidence type="ECO:0000269" key="6">
    <source>
    </source>
</evidence>
<evidence type="ECO:0000269" key="7">
    <source>
    </source>
</evidence>
<evidence type="ECO:0000269" key="8">
    <source>
    </source>
</evidence>
<evidence type="ECO:0000269" key="9">
    <source>
    </source>
</evidence>
<evidence type="ECO:0000269" key="10">
    <source>
    </source>
</evidence>
<evidence type="ECO:0000269" key="11">
    <source>
    </source>
</evidence>
<evidence type="ECO:0000269" key="12">
    <source>
    </source>
</evidence>
<evidence type="ECO:0000269" key="13">
    <source>
    </source>
</evidence>
<evidence type="ECO:0000269" key="14">
    <source>
    </source>
</evidence>
<evidence type="ECO:0000303" key="15">
    <source>
    </source>
</evidence>
<evidence type="ECO:0000303" key="16">
    <source>
    </source>
</evidence>
<evidence type="ECO:0000303" key="17">
    <source>
    </source>
</evidence>
<evidence type="ECO:0000305" key="18"/>
<evidence type="ECO:0000312" key="19">
    <source>
        <dbReference type="HGNC" id="HGNC:25544"/>
    </source>
</evidence>
<evidence type="ECO:0007744" key="20">
    <source>
        <dbReference type="PDB" id="4B7Y"/>
    </source>
</evidence>
<evidence type="ECO:0007744" key="21">
    <source>
        <dbReference type="PDB" id="4B86"/>
    </source>
</evidence>
<evidence type="ECO:0007744" key="22">
    <source>
    </source>
</evidence>
<evidence type="ECO:0007744" key="23">
    <source>
    </source>
</evidence>
<evidence type="ECO:0007744" key="24">
    <source>
    </source>
</evidence>
<evidence type="ECO:0007829" key="25">
    <source>
        <dbReference type="PDB" id="4B7Y"/>
    </source>
</evidence>